<comment type="catalytic activity">
    <reaction evidence="1">
        <text>alpha-D-xylose = alpha-D-xylulofuranose</text>
        <dbReference type="Rhea" id="RHEA:22816"/>
        <dbReference type="ChEBI" id="CHEBI:28518"/>
        <dbReference type="ChEBI" id="CHEBI:188998"/>
        <dbReference type="EC" id="5.3.1.5"/>
    </reaction>
</comment>
<comment type="cofactor">
    <cofactor evidence="1">
        <name>Mg(2+)</name>
        <dbReference type="ChEBI" id="CHEBI:18420"/>
    </cofactor>
    <text evidence="1">Binds 2 magnesium ions per subunit.</text>
</comment>
<comment type="subunit">
    <text evidence="1">Homotetramer.</text>
</comment>
<comment type="subcellular location">
    <subcellularLocation>
        <location evidence="1">Cytoplasm</location>
    </subcellularLocation>
</comment>
<comment type="similarity">
    <text evidence="1">Belongs to the xylose isomerase family.</text>
</comment>
<organism>
    <name type="scientific">Clavibacter sepedonicus</name>
    <name type="common">Clavibacter michiganensis subsp. sepedonicus</name>
    <dbReference type="NCBI Taxonomy" id="31964"/>
    <lineage>
        <taxon>Bacteria</taxon>
        <taxon>Bacillati</taxon>
        <taxon>Actinomycetota</taxon>
        <taxon>Actinomycetes</taxon>
        <taxon>Micrococcales</taxon>
        <taxon>Microbacteriaceae</taxon>
        <taxon>Clavibacter</taxon>
    </lineage>
</organism>
<dbReference type="EC" id="5.3.1.5" evidence="1"/>
<dbReference type="EMBL" id="AM849034">
    <property type="protein sequence ID" value="CAQ00265.1"/>
    <property type="molecule type" value="Genomic_DNA"/>
</dbReference>
<dbReference type="RefSeq" id="WP_012297622.1">
    <property type="nucleotide sequence ID" value="NZ_MZMN01000003.1"/>
</dbReference>
<dbReference type="SMR" id="B0RIF1"/>
<dbReference type="STRING" id="31964.CMS0141"/>
<dbReference type="KEGG" id="cms:CMS0141"/>
<dbReference type="eggNOG" id="COG2115">
    <property type="taxonomic scope" value="Bacteria"/>
</dbReference>
<dbReference type="HOGENOM" id="CLU_060750_0_0_11"/>
<dbReference type="OrthoDB" id="9763981at2"/>
<dbReference type="Proteomes" id="UP000001318">
    <property type="component" value="Chromosome"/>
</dbReference>
<dbReference type="GO" id="GO:0005737">
    <property type="term" value="C:cytoplasm"/>
    <property type="evidence" value="ECO:0007669"/>
    <property type="project" value="UniProtKB-SubCell"/>
</dbReference>
<dbReference type="GO" id="GO:0000287">
    <property type="term" value="F:magnesium ion binding"/>
    <property type="evidence" value="ECO:0007669"/>
    <property type="project" value="UniProtKB-UniRule"/>
</dbReference>
<dbReference type="GO" id="GO:0009045">
    <property type="term" value="F:xylose isomerase activity"/>
    <property type="evidence" value="ECO:0007669"/>
    <property type="project" value="UniProtKB-UniRule"/>
</dbReference>
<dbReference type="GO" id="GO:0042732">
    <property type="term" value="P:D-xylose metabolic process"/>
    <property type="evidence" value="ECO:0007669"/>
    <property type="project" value="UniProtKB-UniRule"/>
</dbReference>
<dbReference type="Gene3D" id="3.20.20.150">
    <property type="entry name" value="Divalent-metal-dependent TIM barrel enzymes"/>
    <property type="match status" value="1"/>
</dbReference>
<dbReference type="HAMAP" id="MF_00455">
    <property type="entry name" value="Xylose_isom_A"/>
    <property type="match status" value="1"/>
</dbReference>
<dbReference type="InterPro" id="IPR036237">
    <property type="entry name" value="Xyl_isomerase-like_sf"/>
</dbReference>
<dbReference type="InterPro" id="IPR013022">
    <property type="entry name" value="Xyl_isomerase-like_TIM-brl"/>
</dbReference>
<dbReference type="InterPro" id="IPR013453">
    <property type="entry name" value="XylA_actinobac"/>
</dbReference>
<dbReference type="InterPro" id="IPR001998">
    <property type="entry name" value="Xylose_isomerase"/>
</dbReference>
<dbReference type="NCBIfam" id="TIGR02631">
    <property type="entry name" value="xylA_Arthro"/>
    <property type="match status" value="1"/>
</dbReference>
<dbReference type="PANTHER" id="PTHR48408">
    <property type="match status" value="1"/>
</dbReference>
<dbReference type="PANTHER" id="PTHR48408:SF1">
    <property type="entry name" value="XYLOSE ISOMERASE"/>
    <property type="match status" value="1"/>
</dbReference>
<dbReference type="Pfam" id="PF01261">
    <property type="entry name" value="AP_endonuc_2"/>
    <property type="match status" value="1"/>
</dbReference>
<dbReference type="PRINTS" id="PR00688">
    <property type="entry name" value="XYLOSISMRASE"/>
</dbReference>
<dbReference type="SUPFAM" id="SSF51658">
    <property type="entry name" value="Xylose isomerase-like"/>
    <property type="match status" value="1"/>
</dbReference>
<dbReference type="PROSITE" id="PS51415">
    <property type="entry name" value="XYLOSE_ISOMERASE"/>
    <property type="match status" value="1"/>
</dbReference>
<proteinExistence type="inferred from homology"/>
<feature type="chain" id="PRO_1000081027" description="Xylose isomerase">
    <location>
        <begin position="1"/>
        <end position="397"/>
    </location>
</feature>
<feature type="active site" evidence="1">
    <location>
        <position position="54"/>
    </location>
</feature>
<feature type="active site" evidence="1">
    <location>
        <position position="57"/>
    </location>
</feature>
<feature type="binding site" evidence="1">
    <location>
        <position position="181"/>
    </location>
    <ligand>
        <name>Mg(2+)</name>
        <dbReference type="ChEBI" id="CHEBI:18420"/>
        <label>1</label>
    </ligand>
</feature>
<feature type="binding site" evidence="1">
    <location>
        <position position="217"/>
    </location>
    <ligand>
        <name>Mg(2+)</name>
        <dbReference type="ChEBI" id="CHEBI:18420"/>
        <label>1</label>
    </ligand>
</feature>
<feature type="binding site" evidence="1">
    <location>
        <position position="217"/>
    </location>
    <ligand>
        <name>Mg(2+)</name>
        <dbReference type="ChEBI" id="CHEBI:18420"/>
        <label>2</label>
    </ligand>
</feature>
<feature type="binding site" evidence="1">
    <location>
        <position position="220"/>
    </location>
    <ligand>
        <name>Mg(2+)</name>
        <dbReference type="ChEBI" id="CHEBI:18420"/>
        <label>2</label>
    </ligand>
</feature>
<feature type="binding site" evidence="1">
    <location>
        <position position="245"/>
    </location>
    <ligand>
        <name>Mg(2+)</name>
        <dbReference type="ChEBI" id="CHEBI:18420"/>
        <label>1</label>
    </ligand>
</feature>
<feature type="binding site" evidence="1">
    <location>
        <position position="255"/>
    </location>
    <ligand>
        <name>Mg(2+)</name>
        <dbReference type="ChEBI" id="CHEBI:18420"/>
        <label>2</label>
    </ligand>
</feature>
<feature type="binding site" evidence="1">
    <location>
        <position position="257"/>
    </location>
    <ligand>
        <name>Mg(2+)</name>
        <dbReference type="ChEBI" id="CHEBI:18420"/>
        <label>2</label>
    </ligand>
</feature>
<feature type="binding site" evidence="1">
    <location>
        <position position="293"/>
    </location>
    <ligand>
        <name>Mg(2+)</name>
        <dbReference type="ChEBI" id="CHEBI:18420"/>
        <label>1</label>
    </ligand>
</feature>
<evidence type="ECO:0000255" key="1">
    <source>
        <dbReference type="HAMAP-Rule" id="MF_00455"/>
    </source>
</evidence>
<keyword id="KW-0119">Carbohydrate metabolism</keyword>
<keyword id="KW-0963">Cytoplasm</keyword>
<keyword id="KW-0413">Isomerase</keyword>
<keyword id="KW-0460">Magnesium</keyword>
<keyword id="KW-0479">Metal-binding</keyword>
<keyword id="KW-0859">Xylose metabolism</keyword>
<name>XYLA_CLASE</name>
<sequence>MALTPTREDKFSFGLWTIGYTGADPFGGPTRSDLDVVEGVERISELGAYGLTFHDDDLFAFGSTDAERQTQIDRLKGALSDTGIVVPMVTTNLFSAPVFKDGGFTSNDRAVRRFAIRKVLRNIDLAAELGAKTFVMWGGREGAEYDSAKDVRGALERYREAVNLLGDYVTDKGYDIRFAIEPKPNEPRGDILLPTLGHALAFIETLERPELVGVNPEVGHEQMAGLNFTAGIMQALYQGKLFHIDLNGQRGIKYDQDLVFGHGDLQNAFSLVDLLENGGVGGGRSYDGPRHFDYKPSRTEDITGVWDSAAANMRMYLLLKERAQAFRADPEVQEALAAAKVAEIDTPTLNEGESYDDILADRSSYEDFAADEYFDAKGFGFVRLNQLALEHLMGARS</sequence>
<gene>
    <name evidence="1" type="primary">xylA</name>
    <name type="ordered locus">CMS0141</name>
</gene>
<protein>
    <recommendedName>
        <fullName evidence="1">Xylose isomerase</fullName>
        <ecNumber evidence="1">5.3.1.5</ecNumber>
    </recommendedName>
</protein>
<reference key="1">
    <citation type="journal article" date="2008" name="J. Bacteriol.">
        <title>Genome of the actinomycete plant pathogen Clavibacter michiganensis subsp. sepedonicus suggests recent niche adaptation.</title>
        <authorList>
            <person name="Bentley S.D."/>
            <person name="Corton C."/>
            <person name="Brown S.E."/>
            <person name="Barron A."/>
            <person name="Clark L."/>
            <person name="Doggett J."/>
            <person name="Harris B."/>
            <person name="Ormond D."/>
            <person name="Quail M.A."/>
            <person name="May G."/>
            <person name="Francis D."/>
            <person name="Knudson D."/>
            <person name="Parkhill J."/>
            <person name="Ishimaru C.A."/>
        </authorList>
    </citation>
    <scope>NUCLEOTIDE SEQUENCE [LARGE SCALE GENOMIC DNA]</scope>
    <source>
        <strain>ATCC 33113 / DSM 20744 / JCM 9667 / LMG 2889 / ICMP 2535 / C-1</strain>
    </source>
</reference>
<accession>B0RIF1</accession>